<dbReference type="EMBL" id="AY073174">
    <property type="protein sequence ID" value="AAL60837.1"/>
    <property type="molecule type" value="Genomic_DNA"/>
</dbReference>
<dbReference type="EMBL" id="AY318553">
    <property type="protein sequence ID" value="AAP71729.1"/>
    <property type="molecule type" value="Genomic_DNA"/>
</dbReference>
<dbReference type="EMBL" id="BC104074">
    <property type="protein sequence ID" value="AAI04075.1"/>
    <property type="molecule type" value="mRNA"/>
</dbReference>
<dbReference type="EMBL" id="BC104075">
    <property type="protein sequence ID" value="AAI04076.1"/>
    <property type="molecule type" value="mRNA"/>
</dbReference>
<dbReference type="EMBL" id="U28778">
    <property type="protein sequence ID" value="AAC52401.1"/>
    <property type="molecule type" value="Genomic_DNA"/>
</dbReference>
<dbReference type="CCDS" id="CCDS57479.1"/>
<dbReference type="RefSeq" id="NP_667125.1">
    <property type="nucleotide sequence ID" value="NM_146914.2"/>
</dbReference>
<dbReference type="RefSeq" id="XP_011248755.1">
    <property type="nucleotide sequence ID" value="XM_011250453.3"/>
</dbReference>
<dbReference type="SMR" id="Q60889"/>
<dbReference type="FunCoup" id="Q60889">
    <property type="interactions" value="1170"/>
</dbReference>
<dbReference type="STRING" id="10090.ENSMUSP00000147586"/>
<dbReference type="GlyCosmos" id="Q60889">
    <property type="glycosylation" value="2 sites, No reported glycans"/>
</dbReference>
<dbReference type="GlyGen" id="Q60889">
    <property type="glycosylation" value="2 sites"/>
</dbReference>
<dbReference type="PaxDb" id="10090-ENSMUSP00000083498"/>
<dbReference type="DNASU" id="18349"/>
<dbReference type="Ensembl" id="ENSMUST00000086318.5">
    <property type="protein sequence ID" value="ENSMUSP00000083498.5"/>
    <property type="gene ID" value="ENSMUSG00000096228.6"/>
</dbReference>
<dbReference type="Ensembl" id="ENSMUST00000209866.4">
    <property type="protein sequence ID" value="ENSMUSP00000147586.3"/>
    <property type="gene ID" value="ENSMUSG00000096228.6"/>
</dbReference>
<dbReference type="GeneID" id="18349"/>
<dbReference type="KEGG" id="mmu:18349"/>
<dbReference type="UCSC" id="uc009fbo.2">
    <property type="organism name" value="mouse"/>
</dbReference>
<dbReference type="AGR" id="MGI:106685"/>
<dbReference type="CTD" id="18349"/>
<dbReference type="MGI" id="MGI:106685">
    <property type="gene designation" value="Or6z7"/>
</dbReference>
<dbReference type="VEuPathDB" id="HostDB:ENSMUSG00000096228"/>
<dbReference type="eggNOG" id="ENOG502QW5T">
    <property type="taxonomic scope" value="Eukaryota"/>
</dbReference>
<dbReference type="GeneTree" id="ENSGT00940000162481"/>
<dbReference type="HOGENOM" id="CLU_012526_1_0_1"/>
<dbReference type="InParanoid" id="Q60889"/>
<dbReference type="OMA" id="MTMASYV"/>
<dbReference type="OrthoDB" id="9599146at2759"/>
<dbReference type="PhylomeDB" id="Q60889"/>
<dbReference type="TreeFam" id="TF337475"/>
<dbReference type="BioGRID-ORCS" id="18349">
    <property type="hits" value="2 hits in 70 CRISPR screens"/>
</dbReference>
<dbReference type="PRO" id="PR:Q60889"/>
<dbReference type="Proteomes" id="UP000000589">
    <property type="component" value="Chromosome 7"/>
</dbReference>
<dbReference type="RNAct" id="Q60889">
    <property type="molecule type" value="protein"/>
</dbReference>
<dbReference type="GO" id="GO:0016020">
    <property type="term" value="C:membrane"/>
    <property type="evidence" value="ECO:0000247"/>
    <property type="project" value="MGI"/>
</dbReference>
<dbReference type="GO" id="GO:0005886">
    <property type="term" value="C:plasma membrane"/>
    <property type="evidence" value="ECO:0007669"/>
    <property type="project" value="UniProtKB-SubCell"/>
</dbReference>
<dbReference type="GO" id="GO:0004930">
    <property type="term" value="F:G protein-coupled receptor activity"/>
    <property type="evidence" value="ECO:0007669"/>
    <property type="project" value="UniProtKB-KW"/>
</dbReference>
<dbReference type="GO" id="GO:0004984">
    <property type="term" value="F:olfactory receptor activity"/>
    <property type="evidence" value="ECO:0000247"/>
    <property type="project" value="MGI"/>
</dbReference>
<dbReference type="GO" id="GO:0007186">
    <property type="term" value="P:G protein-coupled receptor signaling pathway"/>
    <property type="evidence" value="ECO:0000247"/>
    <property type="project" value="MGI"/>
</dbReference>
<dbReference type="GO" id="GO:0007608">
    <property type="term" value="P:sensory perception of smell"/>
    <property type="evidence" value="ECO:0000247"/>
    <property type="project" value="MGI"/>
</dbReference>
<dbReference type="CDD" id="cd15224">
    <property type="entry name" value="7tmA_OR6B-like"/>
    <property type="match status" value="1"/>
</dbReference>
<dbReference type="FunFam" id="1.20.1070.10:FF:000001">
    <property type="entry name" value="Olfactory receptor"/>
    <property type="match status" value="1"/>
</dbReference>
<dbReference type="Gene3D" id="1.20.1070.10">
    <property type="entry name" value="Rhodopsin 7-helix transmembrane proteins"/>
    <property type="match status" value="1"/>
</dbReference>
<dbReference type="InterPro" id="IPR000276">
    <property type="entry name" value="GPCR_Rhodpsn"/>
</dbReference>
<dbReference type="InterPro" id="IPR017452">
    <property type="entry name" value="GPCR_Rhodpsn_7TM"/>
</dbReference>
<dbReference type="InterPro" id="IPR000725">
    <property type="entry name" value="Olfact_rcpt"/>
</dbReference>
<dbReference type="InterPro" id="IPR050939">
    <property type="entry name" value="Olfactory_GPCR1"/>
</dbReference>
<dbReference type="PANTHER" id="PTHR24242">
    <property type="entry name" value="G-PROTEIN COUPLED RECEPTOR"/>
    <property type="match status" value="1"/>
</dbReference>
<dbReference type="PANTHER" id="PTHR24242:SF253">
    <property type="entry name" value="OLFACTORY RECEPTOR-RELATED"/>
    <property type="match status" value="1"/>
</dbReference>
<dbReference type="Pfam" id="PF13853">
    <property type="entry name" value="7tm_4"/>
    <property type="match status" value="1"/>
</dbReference>
<dbReference type="PRINTS" id="PR00237">
    <property type="entry name" value="GPCRRHODOPSN"/>
</dbReference>
<dbReference type="PRINTS" id="PR00245">
    <property type="entry name" value="OLFACTORYR"/>
</dbReference>
<dbReference type="SUPFAM" id="SSF81321">
    <property type="entry name" value="Family A G protein-coupled receptor-like"/>
    <property type="match status" value="1"/>
</dbReference>
<dbReference type="PROSITE" id="PS00237">
    <property type="entry name" value="G_PROTEIN_RECEP_F1_1"/>
    <property type="match status" value="1"/>
</dbReference>
<dbReference type="PROSITE" id="PS50262">
    <property type="entry name" value="G_PROTEIN_RECEP_F1_2"/>
    <property type="match status" value="1"/>
</dbReference>
<gene>
    <name evidence="4" type="primary">Or6z7</name>
    <name evidence="4" type="synonym">Mor103-8</name>
    <name evidence="4" type="synonym">Olfr5</name>
</gene>
<protein>
    <recommendedName>
        <fullName evidence="3">Olfactory receptor 6Z7</fullName>
    </recommendedName>
    <alternativeName>
        <fullName>Odorant receptor M41</fullName>
    </alternativeName>
    <alternativeName>
        <fullName>Olfactory receptor 103-8</fullName>
    </alternativeName>
    <alternativeName>
        <fullName>Olfactory receptor 5</fullName>
    </alternativeName>
</protein>
<keyword id="KW-1003">Cell membrane</keyword>
<keyword id="KW-1015">Disulfide bond</keyword>
<keyword id="KW-0297">G-protein coupled receptor</keyword>
<keyword id="KW-0325">Glycoprotein</keyword>
<keyword id="KW-0472">Membrane</keyword>
<keyword id="KW-0552">Olfaction</keyword>
<keyword id="KW-0675">Receptor</keyword>
<keyword id="KW-1185">Reference proteome</keyword>
<keyword id="KW-0716">Sensory transduction</keyword>
<keyword id="KW-0807">Transducer</keyword>
<keyword id="KW-0812">Transmembrane</keyword>
<keyword id="KW-1133">Transmembrane helix</keyword>
<sequence length="312" mass="35281">MERSLALANMTRVQQFILLGLSTRLDIRDALFAVFLTLYLLTLLENTLIIYLICSHKELHKPMYFFLGNLSCLEMCYVSVTMPTLLMGLWNGLYHIPFIACMTQLFFFIVLVGTECILLASMAYDRYVAICRPLHYPVLMRPQVCLGLAMISWLGGLLVSMIKTTCIATLSYCGPNVLNHFFCDVSPLLNLSCTHVALTELVDFISAIVILWGCFLTTMASYVAIGRAVLRMPSTTARYKAFSTCASHLVVVGIFYSVTIFIYARPKRIEAMDLNKVLSVIYTVVTPMCNPVIYCLRNKEVQVALHRTMHWS</sequence>
<name>OR6Z7_MOUSE</name>
<reference key="1">
    <citation type="journal article" date="2002" name="Nat. Neurosci.">
        <title>The olfactory receptor gene superfamily of the mouse.</title>
        <authorList>
            <person name="Zhang X."/>
            <person name="Firestein S."/>
        </authorList>
    </citation>
    <scope>NUCLEOTIDE SEQUENCE [GENOMIC DNA]</scope>
</reference>
<reference key="2">
    <citation type="journal article" date="2002" name="Hum. Mol. Genet.">
        <title>Different evolutionary processes shaped the mouse and human olfactory receptor gene families.</title>
        <authorList>
            <person name="Young J.M."/>
            <person name="Friedman C."/>
            <person name="Williams E.M."/>
            <person name="Ross J.A."/>
            <person name="Tonnes-Priddy L."/>
            <person name="Trask B.J."/>
        </authorList>
    </citation>
    <scope>NUCLEOTIDE SEQUENCE [GENOMIC DNA]</scope>
</reference>
<reference key="3">
    <citation type="journal article" date="2002" name="Hum. Mol. Genet.">
        <authorList>
            <person name="Young J.M."/>
            <person name="Friedman C."/>
            <person name="Williams E.M."/>
            <person name="Ross J.A."/>
            <person name="Tonnes-Priddy L."/>
            <person name="Trask B.J."/>
        </authorList>
    </citation>
    <scope>ERRATUM OF PUBMED:11875048</scope>
</reference>
<reference key="4">
    <citation type="journal article" date="2004" name="Genome Res.">
        <title>The status, quality, and expansion of the NIH full-length cDNA project: the Mammalian Gene Collection (MGC).</title>
        <authorList>
            <consortium name="The MGC Project Team"/>
        </authorList>
    </citation>
    <scope>NUCLEOTIDE SEQUENCE [LARGE SCALE MRNA]</scope>
</reference>
<reference key="5">
    <citation type="journal article" date="1996" name="Proc. Natl. Acad. Sci. U.S.A.">
        <title>The chromosomal distribution of mouse odorant receptor genes.</title>
        <authorList>
            <person name="Sullivan S.L."/>
            <person name="Adamson M.C."/>
            <person name="Ressler K.J."/>
            <person name="Kozak C.A."/>
            <person name="Buck L.B."/>
        </authorList>
    </citation>
    <scope>NUCLEOTIDE SEQUENCE [GENOMIC DNA] OF 132-243</scope>
    <source>
        <strain>C57BL/6J</strain>
    </source>
</reference>
<evidence type="ECO:0000255" key="1"/>
<evidence type="ECO:0000255" key="2">
    <source>
        <dbReference type="PROSITE-ProRule" id="PRU00521"/>
    </source>
</evidence>
<evidence type="ECO:0000305" key="3"/>
<evidence type="ECO:0000312" key="4">
    <source>
        <dbReference type="MGI" id="MGI:106685"/>
    </source>
</evidence>
<feature type="chain" id="PRO_0000150805" description="Olfactory receptor 6Z7">
    <location>
        <begin position="1"/>
        <end position="312"/>
    </location>
</feature>
<feature type="topological domain" description="Extracellular" evidence="1">
    <location>
        <begin position="1"/>
        <end position="29"/>
    </location>
</feature>
<feature type="transmembrane region" description="Helical; Name=1" evidence="1">
    <location>
        <begin position="30"/>
        <end position="50"/>
    </location>
</feature>
<feature type="topological domain" description="Cytoplasmic" evidence="1">
    <location>
        <begin position="51"/>
        <end position="69"/>
    </location>
</feature>
<feature type="transmembrane region" description="Helical; Name=2" evidence="1">
    <location>
        <begin position="70"/>
        <end position="90"/>
    </location>
</feature>
<feature type="topological domain" description="Extracellular" evidence="1">
    <location>
        <position position="91"/>
    </location>
</feature>
<feature type="transmembrane region" description="Helical; Name=3" evidence="1">
    <location>
        <begin position="92"/>
        <end position="112"/>
    </location>
</feature>
<feature type="topological domain" description="Cytoplasmic" evidence="1">
    <location>
        <begin position="113"/>
        <end position="141"/>
    </location>
</feature>
<feature type="transmembrane region" description="Helical; Name=4" evidence="1">
    <location>
        <begin position="142"/>
        <end position="162"/>
    </location>
</feature>
<feature type="topological domain" description="Extracellular" evidence="1">
    <location>
        <begin position="163"/>
        <end position="195"/>
    </location>
</feature>
<feature type="transmembrane region" description="Helical; Name=5" evidence="1">
    <location>
        <begin position="196"/>
        <end position="216"/>
    </location>
</feature>
<feature type="topological domain" description="Cytoplasmic" evidence="1">
    <location>
        <begin position="217"/>
        <end position="241"/>
    </location>
</feature>
<feature type="transmembrane region" description="Helical; Name=6" evidence="1">
    <location>
        <begin position="242"/>
        <end position="262"/>
    </location>
</feature>
<feature type="topological domain" description="Extracellular" evidence="1">
    <location>
        <begin position="263"/>
        <end position="275"/>
    </location>
</feature>
<feature type="transmembrane region" description="Helical; Name=7" evidence="1">
    <location>
        <begin position="276"/>
        <end position="296"/>
    </location>
</feature>
<feature type="topological domain" description="Cytoplasmic" evidence="1">
    <location>
        <begin position="297"/>
        <end position="312"/>
    </location>
</feature>
<feature type="glycosylation site" description="N-linked (GlcNAc...) asparagine" evidence="1">
    <location>
        <position position="9"/>
    </location>
</feature>
<feature type="glycosylation site" description="N-linked (GlcNAc...) asparagine" evidence="1">
    <location>
        <position position="190"/>
    </location>
</feature>
<feature type="disulfide bond" evidence="2">
    <location>
        <begin position="101"/>
        <end position="193"/>
    </location>
</feature>
<comment type="function">
    <text evidence="3">Odorant receptor.</text>
</comment>
<comment type="subcellular location">
    <subcellularLocation>
        <location evidence="3">Cell membrane</location>
        <topology evidence="1">Multi-pass membrane protein</topology>
    </subcellularLocation>
</comment>
<comment type="similarity">
    <text evidence="2">Belongs to the G-protein coupled receptor 1 family.</text>
</comment>
<proteinExistence type="evidence at transcript level"/>
<organism>
    <name type="scientific">Mus musculus</name>
    <name type="common">Mouse</name>
    <dbReference type="NCBI Taxonomy" id="10090"/>
    <lineage>
        <taxon>Eukaryota</taxon>
        <taxon>Metazoa</taxon>
        <taxon>Chordata</taxon>
        <taxon>Craniata</taxon>
        <taxon>Vertebrata</taxon>
        <taxon>Euteleostomi</taxon>
        <taxon>Mammalia</taxon>
        <taxon>Eutheria</taxon>
        <taxon>Euarchontoglires</taxon>
        <taxon>Glires</taxon>
        <taxon>Rodentia</taxon>
        <taxon>Myomorpha</taxon>
        <taxon>Muroidea</taxon>
        <taxon>Muridae</taxon>
        <taxon>Murinae</taxon>
        <taxon>Mus</taxon>
        <taxon>Mus</taxon>
    </lineage>
</organism>
<accession>Q60889</accession>
<accession>Q3MI75</accession>
<accession>Q8VGH4</accession>